<gene>
    <name type="primary">pta</name>
    <name type="ordered locus">PP_0774</name>
</gene>
<feature type="chain" id="PRO_0000405550" description="Phosphate acetyltransferase">
    <location>
        <begin position="1"/>
        <end position="695"/>
    </location>
</feature>
<feature type="region of interest" description="Phosphate acetyltransferase">
    <location>
        <begin position="374"/>
        <end position="695"/>
    </location>
</feature>
<dbReference type="EC" id="2.3.1.8"/>
<dbReference type="EMBL" id="AE015451">
    <property type="protein sequence ID" value="AAN66399.1"/>
    <property type="molecule type" value="Genomic_DNA"/>
</dbReference>
<dbReference type="RefSeq" id="NP_742935.1">
    <property type="nucleotide sequence ID" value="NC_002947.4"/>
</dbReference>
<dbReference type="RefSeq" id="WP_010952014.1">
    <property type="nucleotide sequence ID" value="NZ_CP169744.1"/>
</dbReference>
<dbReference type="SMR" id="Q88PS4"/>
<dbReference type="STRING" id="160488.PP_0774"/>
<dbReference type="PaxDb" id="160488-PP_0774"/>
<dbReference type="GeneID" id="83678127"/>
<dbReference type="KEGG" id="ppu:PP_0774"/>
<dbReference type="PATRIC" id="fig|160488.4.peg.830"/>
<dbReference type="eggNOG" id="COG0280">
    <property type="taxonomic scope" value="Bacteria"/>
</dbReference>
<dbReference type="eggNOG" id="COG0857">
    <property type="taxonomic scope" value="Bacteria"/>
</dbReference>
<dbReference type="HOGENOM" id="CLU_019723_2_1_6"/>
<dbReference type="OrthoDB" id="9808984at2"/>
<dbReference type="PhylomeDB" id="Q88PS4"/>
<dbReference type="BioCyc" id="PPUT160488:G1G01-850-MONOMER"/>
<dbReference type="UniPathway" id="UPA00340">
    <property type="reaction ID" value="UER00459"/>
</dbReference>
<dbReference type="Proteomes" id="UP000000556">
    <property type="component" value="Chromosome"/>
</dbReference>
<dbReference type="GO" id="GO:0005737">
    <property type="term" value="C:cytoplasm"/>
    <property type="evidence" value="ECO:0007669"/>
    <property type="project" value="UniProtKB-SubCell"/>
</dbReference>
<dbReference type="GO" id="GO:0008959">
    <property type="term" value="F:phosphate acetyltransferase activity"/>
    <property type="evidence" value="ECO:0007669"/>
    <property type="project" value="UniProtKB-EC"/>
</dbReference>
<dbReference type="GO" id="GO:0006085">
    <property type="term" value="P:acetyl-CoA biosynthetic process"/>
    <property type="evidence" value="ECO:0007669"/>
    <property type="project" value="UniProtKB-UniPathway"/>
</dbReference>
<dbReference type="CDD" id="cd03109">
    <property type="entry name" value="DTBS"/>
    <property type="match status" value="1"/>
</dbReference>
<dbReference type="Gene3D" id="3.40.50.10950">
    <property type="match status" value="1"/>
</dbReference>
<dbReference type="Gene3D" id="3.40.1390.20">
    <property type="entry name" value="HprK N-terminal domain-like"/>
    <property type="match status" value="1"/>
</dbReference>
<dbReference type="Gene3D" id="3.40.50.10750">
    <property type="entry name" value="Isocitrate/Isopropylmalate dehydrogenase-like"/>
    <property type="match status" value="1"/>
</dbReference>
<dbReference type="Gene3D" id="3.40.50.300">
    <property type="entry name" value="P-loop containing nucleotide triphosphate hydrolases"/>
    <property type="match status" value="1"/>
</dbReference>
<dbReference type="InterPro" id="IPR010766">
    <property type="entry name" value="DRTGG"/>
</dbReference>
<dbReference type="InterPro" id="IPR016475">
    <property type="entry name" value="P-Actrans_bac"/>
</dbReference>
<dbReference type="InterPro" id="IPR027417">
    <property type="entry name" value="P-loop_NTPase"/>
</dbReference>
<dbReference type="InterPro" id="IPR004614">
    <property type="entry name" value="P_AcTrfase"/>
</dbReference>
<dbReference type="InterPro" id="IPR042113">
    <property type="entry name" value="P_AcTrfase_dom1"/>
</dbReference>
<dbReference type="InterPro" id="IPR042112">
    <property type="entry name" value="P_AcTrfase_dom2"/>
</dbReference>
<dbReference type="InterPro" id="IPR050500">
    <property type="entry name" value="Phos_Acetyltrans/Butyryltrans"/>
</dbReference>
<dbReference type="InterPro" id="IPR002505">
    <property type="entry name" value="PTA_PTB"/>
</dbReference>
<dbReference type="InterPro" id="IPR028979">
    <property type="entry name" value="Ser_kin/Pase_Hpr-like_N_sf"/>
</dbReference>
<dbReference type="NCBIfam" id="NF004167">
    <property type="entry name" value="PRK05632.1"/>
    <property type="match status" value="1"/>
</dbReference>
<dbReference type="NCBIfam" id="NF007233">
    <property type="entry name" value="PRK09653.1"/>
    <property type="match status" value="1"/>
</dbReference>
<dbReference type="NCBIfam" id="TIGR00651">
    <property type="entry name" value="pta"/>
    <property type="match status" value="1"/>
</dbReference>
<dbReference type="PANTHER" id="PTHR43356">
    <property type="entry name" value="PHOSPHATE ACETYLTRANSFERASE"/>
    <property type="match status" value="1"/>
</dbReference>
<dbReference type="PANTHER" id="PTHR43356:SF3">
    <property type="entry name" value="PHOSPHATE ACETYLTRANSFERASE"/>
    <property type="match status" value="1"/>
</dbReference>
<dbReference type="Pfam" id="PF13500">
    <property type="entry name" value="AAA_26"/>
    <property type="match status" value="1"/>
</dbReference>
<dbReference type="Pfam" id="PF07085">
    <property type="entry name" value="DRTGG"/>
    <property type="match status" value="1"/>
</dbReference>
<dbReference type="Pfam" id="PF01515">
    <property type="entry name" value="PTA_PTB"/>
    <property type="match status" value="1"/>
</dbReference>
<dbReference type="PIRSF" id="PIRSF006107">
    <property type="entry name" value="PhpActrans_proteobac"/>
    <property type="match status" value="1"/>
</dbReference>
<dbReference type="SUPFAM" id="SSF75138">
    <property type="entry name" value="HprK N-terminal domain-like"/>
    <property type="match status" value="1"/>
</dbReference>
<dbReference type="SUPFAM" id="SSF53659">
    <property type="entry name" value="Isocitrate/Isopropylmalate dehydrogenase-like"/>
    <property type="match status" value="1"/>
</dbReference>
<dbReference type="SUPFAM" id="SSF52540">
    <property type="entry name" value="P-loop containing nucleoside triphosphate hydrolases"/>
    <property type="match status" value="1"/>
</dbReference>
<organism>
    <name type="scientific">Pseudomonas putida (strain ATCC 47054 / DSM 6125 / CFBP 8728 / NCIMB 11950 / KT2440)</name>
    <dbReference type="NCBI Taxonomy" id="160488"/>
    <lineage>
        <taxon>Bacteria</taxon>
        <taxon>Pseudomonadati</taxon>
        <taxon>Pseudomonadota</taxon>
        <taxon>Gammaproteobacteria</taxon>
        <taxon>Pseudomonadales</taxon>
        <taxon>Pseudomonadaceae</taxon>
        <taxon>Pseudomonas</taxon>
    </lineage>
</organism>
<name>PTA_PSEPK</name>
<accession>Q88PS4</accession>
<proteinExistence type="inferred from homology"/>
<evidence type="ECO:0000250" key="1"/>
<evidence type="ECO:0000305" key="2"/>
<comment type="function">
    <text evidence="1">Involved in acetate metabolism.</text>
</comment>
<comment type="catalytic activity">
    <reaction>
        <text>acetyl-CoA + phosphate = acetyl phosphate + CoA</text>
        <dbReference type="Rhea" id="RHEA:19521"/>
        <dbReference type="ChEBI" id="CHEBI:22191"/>
        <dbReference type="ChEBI" id="CHEBI:43474"/>
        <dbReference type="ChEBI" id="CHEBI:57287"/>
        <dbReference type="ChEBI" id="CHEBI:57288"/>
        <dbReference type="EC" id="2.3.1.8"/>
    </reaction>
</comment>
<comment type="pathway">
    <text>Metabolic intermediate biosynthesis; acetyl-CoA biosynthesis; acetyl-CoA from acetate: step 2/2.</text>
</comment>
<comment type="subunit">
    <text evidence="1">Homohexamer.</text>
</comment>
<comment type="subcellular location">
    <subcellularLocation>
        <location evidence="2">Cytoplasm</location>
    </subcellularLocation>
</comment>
<comment type="domain">
    <text evidence="1">The N-terminal region seems to be important for proper quaternary structure. The C-terminal region contains the substrate-binding site (By similarity).</text>
</comment>
<comment type="similarity">
    <text evidence="2">In the N-terminal section; belongs to the CobB/CobQ family.</text>
</comment>
<comment type="similarity">
    <text evidence="2">In the C-terminal section; belongs to the phosphate acetyltransferase and butyryltransferase family.</text>
</comment>
<sequence>MQTFFIAPTDFGVGLTSISLGLVRTLERAGLKVGFFKPIAQPHPGDTGPERSTELVARTHGIKPPVPLSLAHVERMLGDGQLDELLEEIIRLYQQACVGNDVVVVEGMVPTRHASYAARVNLHLAKSLDAEVILVSAPENEVLSELSGRVELQAQLFGGPRDPKVLGVILNKVRTDESMADFATRLREHSPLLRGNDFRLLGCIPYQPELNAPRTRDVAELLGAQVLNAGDYEQRRMSKIIICARTVANTVPLLTSGTLVVTPGDRDDIILAVSLAAINGVPLAGLLLTSDSKPDVRILGLCRGALQAGLPILSVSTGSYDTANQLNSLNREIPVDDRERAEFITDFVASHLDAAWLHQRCGTPRELRLSPAVFRYQLIQRAQQANKRIVLPEGAEPLLVQAAAICQARGIARCVLLAKPEDVDAVARAQGITLPPGLEILDPELIRGRYVEPMVELRKSKNLNAPMAEQQLEDPVVIGTMMLALDEVDGLVSGLVHSTANTIRPALQLIKTAPGSSLVSSVFFMLFPEQVLVYGDCVMNPHPSAAELAEIAQQSAASAQAFGIAPRVAMISYSSDSASDEEVEKVREATRLAQDAAQELLIDGPLQYDAAANPAIARELAPASPVAGRATVFVFPDLNTGNTTHKAVQRSADGVSLGPMLQGLRKPVNDLPRGAQVDDIVHTIALTAIQASVAR</sequence>
<keyword id="KW-0012">Acyltransferase</keyword>
<keyword id="KW-0963">Cytoplasm</keyword>
<keyword id="KW-1185">Reference proteome</keyword>
<keyword id="KW-0808">Transferase</keyword>
<reference key="1">
    <citation type="journal article" date="2002" name="Environ. Microbiol.">
        <title>Complete genome sequence and comparative analysis of the metabolically versatile Pseudomonas putida KT2440.</title>
        <authorList>
            <person name="Nelson K.E."/>
            <person name="Weinel C."/>
            <person name="Paulsen I.T."/>
            <person name="Dodson R.J."/>
            <person name="Hilbert H."/>
            <person name="Martins dos Santos V.A.P."/>
            <person name="Fouts D.E."/>
            <person name="Gill S.R."/>
            <person name="Pop M."/>
            <person name="Holmes M."/>
            <person name="Brinkac L.M."/>
            <person name="Beanan M.J."/>
            <person name="DeBoy R.T."/>
            <person name="Daugherty S.C."/>
            <person name="Kolonay J.F."/>
            <person name="Madupu R."/>
            <person name="Nelson W.C."/>
            <person name="White O."/>
            <person name="Peterson J.D."/>
            <person name="Khouri H.M."/>
            <person name="Hance I."/>
            <person name="Chris Lee P."/>
            <person name="Holtzapple E.K."/>
            <person name="Scanlan D."/>
            <person name="Tran K."/>
            <person name="Moazzez A."/>
            <person name="Utterback T.R."/>
            <person name="Rizzo M."/>
            <person name="Lee K."/>
            <person name="Kosack D."/>
            <person name="Moestl D."/>
            <person name="Wedler H."/>
            <person name="Lauber J."/>
            <person name="Stjepandic D."/>
            <person name="Hoheisel J."/>
            <person name="Straetz M."/>
            <person name="Heim S."/>
            <person name="Kiewitz C."/>
            <person name="Eisen J.A."/>
            <person name="Timmis K.N."/>
            <person name="Duesterhoeft A."/>
            <person name="Tuemmler B."/>
            <person name="Fraser C.M."/>
        </authorList>
    </citation>
    <scope>NUCLEOTIDE SEQUENCE [LARGE SCALE GENOMIC DNA]</scope>
    <source>
        <strain>ATCC 47054 / DSM 6125 / CFBP 8728 / NCIMB 11950 / KT2440</strain>
    </source>
</reference>
<protein>
    <recommendedName>
        <fullName>Phosphate acetyltransferase</fullName>
        <ecNumber>2.3.1.8</ecNumber>
    </recommendedName>
    <alternativeName>
        <fullName>Phosphotransacetylase</fullName>
    </alternativeName>
</protein>